<feature type="chain" id="PRO_0000269652" description="Suppressor of glycerol defect protein 1">
    <location>
        <begin position="1"/>
        <end position="899"/>
    </location>
</feature>
<feature type="domain" description="MIF4G" evidence="1">
    <location>
        <begin position="335"/>
        <end position="540"/>
    </location>
</feature>
<feature type="domain" description="MI" evidence="1">
    <location>
        <begin position="644"/>
        <end position="781"/>
    </location>
</feature>
<feature type="region of interest" description="Disordered" evidence="2">
    <location>
        <begin position="24"/>
        <end position="181"/>
    </location>
</feature>
<feature type="region of interest" description="Disordered" evidence="2">
    <location>
        <begin position="248"/>
        <end position="326"/>
    </location>
</feature>
<feature type="compositionally biased region" description="Basic and acidic residues" evidence="2">
    <location>
        <begin position="24"/>
        <end position="33"/>
    </location>
</feature>
<feature type="compositionally biased region" description="Basic residues" evidence="2">
    <location>
        <begin position="34"/>
        <end position="49"/>
    </location>
</feature>
<feature type="compositionally biased region" description="Polar residues" evidence="2">
    <location>
        <begin position="65"/>
        <end position="77"/>
    </location>
</feature>
<feature type="compositionally biased region" description="Acidic residues" evidence="2">
    <location>
        <begin position="103"/>
        <end position="126"/>
    </location>
</feature>
<feature type="compositionally biased region" description="Basic and acidic residues" evidence="2">
    <location>
        <begin position="134"/>
        <end position="143"/>
    </location>
</feature>
<feature type="compositionally biased region" description="Basic and acidic residues" evidence="2">
    <location>
        <begin position="162"/>
        <end position="174"/>
    </location>
</feature>
<feature type="compositionally biased region" description="Basic and acidic residues" evidence="2">
    <location>
        <begin position="251"/>
        <end position="264"/>
    </location>
</feature>
<feature type="compositionally biased region" description="Acidic residues" evidence="2">
    <location>
        <begin position="265"/>
        <end position="292"/>
    </location>
</feature>
<feature type="modified residue" description="Phosphoserine" evidence="8">
    <location>
        <position position="736"/>
    </location>
</feature>
<keyword id="KW-0539">Nucleus</keyword>
<keyword id="KW-0597">Phosphoprotein</keyword>
<keyword id="KW-1185">Reference proteome</keyword>
<organism>
    <name type="scientific">Saccharomyces cerevisiae (strain ATCC 204508 / S288c)</name>
    <name type="common">Baker's yeast</name>
    <dbReference type="NCBI Taxonomy" id="559292"/>
    <lineage>
        <taxon>Eukaryota</taxon>
        <taxon>Fungi</taxon>
        <taxon>Dikarya</taxon>
        <taxon>Ascomycota</taxon>
        <taxon>Saccharomycotina</taxon>
        <taxon>Saccharomycetes</taxon>
        <taxon>Saccharomycetales</taxon>
        <taxon>Saccharomycetaceae</taxon>
        <taxon>Saccharomyces</taxon>
    </lineage>
</organism>
<dbReference type="EMBL" id="U19028">
    <property type="protein sequence ID" value="AAB67262.1"/>
    <property type="molecule type" value="Genomic_DNA"/>
</dbReference>
<dbReference type="EMBL" id="BK006945">
    <property type="protein sequence ID" value="DAA09642.1"/>
    <property type="molecule type" value="Genomic_DNA"/>
</dbReference>
<dbReference type="PIR" id="S51341">
    <property type="entry name" value="S51341"/>
</dbReference>
<dbReference type="RefSeq" id="NP_013440.1">
    <property type="nucleotide sequence ID" value="NM_001182225.1"/>
</dbReference>
<dbReference type="SMR" id="Q06132"/>
<dbReference type="BioGRID" id="31600">
    <property type="interactions" value="116"/>
</dbReference>
<dbReference type="ComplexPortal" id="CPX-242">
    <property type="entry name" value="FAL1-SGD1 complex"/>
</dbReference>
<dbReference type="DIP" id="DIP-6333N"/>
<dbReference type="FunCoup" id="Q06132">
    <property type="interactions" value="763"/>
</dbReference>
<dbReference type="IntAct" id="Q06132">
    <property type="interactions" value="49"/>
</dbReference>
<dbReference type="MINT" id="Q06132"/>
<dbReference type="STRING" id="4932.YLR336C"/>
<dbReference type="GlyGen" id="Q06132">
    <property type="glycosylation" value="1 site"/>
</dbReference>
<dbReference type="iPTMnet" id="Q06132"/>
<dbReference type="PaxDb" id="4932-YLR336C"/>
<dbReference type="PeptideAtlas" id="Q06132"/>
<dbReference type="EnsemblFungi" id="YLR336C_mRNA">
    <property type="protein sequence ID" value="YLR336C"/>
    <property type="gene ID" value="YLR336C"/>
</dbReference>
<dbReference type="GeneID" id="851049"/>
<dbReference type="KEGG" id="sce:YLR336C"/>
<dbReference type="AGR" id="SGD:S000004328"/>
<dbReference type="SGD" id="S000004328">
    <property type="gene designation" value="SGD1"/>
</dbReference>
<dbReference type="VEuPathDB" id="FungiDB:YLR336C"/>
<dbReference type="eggNOG" id="KOG2141">
    <property type="taxonomic scope" value="Eukaryota"/>
</dbReference>
<dbReference type="GeneTree" id="ENSGT00940000153458"/>
<dbReference type="HOGENOM" id="CLU_006786_2_0_1"/>
<dbReference type="InParanoid" id="Q06132"/>
<dbReference type="OMA" id="MQYYAKK"/>
<dbReference type="OrthoDB" id="361797at2759"/>
<dbReference type="BioCyc" id="YEAST:G3O-32415-MONOMER"/>
<dbReference type="BioGRID-ORCS" id="851049">
    <property type="hits" value="4 hits in 10 CRISPR screens"/>
</dbReference>
<dbReference type="CD-CODE" id="BDAE0F88">
    <property type="entry name" value="Nucleolus"/>
</dbReference>
<dbReference type="PRO" id="PR:Q06132"/>
<dbReference type="Proteomes" id="UP000002311">
    <property type="component" value="Chromosome XII"/>
</dbReference>
<dbReference type="RNAct" id="Q06132">
    <property type="molecule type" value="protein"/>
</dbReference>
<dbReference type="GO" id="GO:0097078">
    <property type="term" value="C:FAL1-SGD1 complex"/>
    <property type="evidence" value="ECO:0000314"/>
    <property type="project" value="ComplexPortal"/>
</dbReference>
<dbReference type="GO" id="GO:0005730">
    <property type="term" value="C:nucleolus"/>
    <property type="evidence" value="ECO:0000314"/>
    <property type="project" value="SGD"/>
</dbReference>
<dbReference type="GO" id="GO:0005634">
    <property type="term" value="C:nucleus"/>
    <property type="evidence" value="ECO:0000314"/>
    <property type="project" value="SGD"/>
</dbReference>
<dbReference type="GO" id="GO:0032040">
    <property type="term" value="C:small-subunit processome"/>
    <property type="evidence" value="ECO:0000353"/>
    <property type="project" value="ComplexPortal"/>
</dbReference>
<dbReference type="GO" id="GO:0003723">
    <property type="term" value="F:RNA binding"/>
    <property type="evidence" value="ECO:0000318"/>
    <property type="project" value="GO_Central"/>
</dbReference>
<dbReference type="GO" id="GO:0006972">
    <property type="term" value="P:hyperosmotic response"/>
    <property type="evidence" value="ECO:0000316"/>
    <property type="project" value="SGD"/>
</dbReference>
<dbReference type="GO" id="GO:0030490">
    <property type="term" value="P:maturation of SSU-rRNA"/>
    <property type="evidence" value="ECO:0000303"/>
    <property type="project" value="ComplexPortal"/>
</dbReference>
<dbReference type="GO" id="GO:0000462">
    <property type="term" value="P:maturation of SSU-rRNA from tricistronic rRNA transcript (SSU-rRNA, 5.8S rRNA, LSU-rRNA)"/>
    <property type="evidence" value="ECO:0000315"/>
    <property type="project" value="ComplexPortal"/>
</dbReference>
<dbReference type="GO" id="GO:0042274">
    <property type="term" value="P:ribosomal small subunit biogenesis"/>
    <property type="evidence" value="ECO:0000315"/>
    <property type="project" value="SGD"/>
</dbReference>
<dbReference type="FunFam" id="1.25.40.180:FF:000075">
    <property type="entry name" value="SGD1p nuclear protein"/>
    <property type="match status" value="1"/>
</dbReference>
<dbReference type="Gene3D" id="1.25.40.180">
    <property type="match status" value="1"/>
</dbReference>
<dbReference type="InterPro" id="IPR016024">
    <property type="entry name" value="ARM-type_fold"/>
</dbReference>
<dbReference type="InterPro" id="IPR050781">
    <property type="entry name" value="CWC22_splicing_factor"/>
</dbReference>
<dbReference type="InterPro" id="IPR003891">
    <property type="entry name" value="Initiation_fac_eIF4g_MI"/>
</dbReference>
<dbReference type="InterPro" id="IPR003890">
    <property type="entry name" value="MIF4G-like_typ-3"/>
</dbReference>
<dbReference type="PANTHER" id="PTHR18034">
    <property type="entry name" value="CELL CYCLE CONTROL PROTEIN CWF22-RELATED"/>
    <property type="match status" value="1"/>
</dbReference>
<dbReference type="PANTHER" id="PTHR18034:SF4">
    <property type="entry name" value="NUCLEOLAR MIF4G DOMAIN-CONTAINING PROTEIN 1"/>
    <property type="match status" value="1"/>
</dbReference>
<dbReference type="Pfam" id="PF02847">
    <property type="entry name" value="MA3"/>
    <property type="match status" value="1"/>
</dbReference>
<dbReference type="Pfam" id="PF02854">
    <property type="entry name" value="MIF4G"/>
    <property type="match status" value="1"/>
</dbReference>
<dbReference type="SMART" id="SM00544">
    <property type="entry name" value="MA3"/>
    <property type="match status" value="1"/>
</dbReference>
<dbReference type="SMART" id="SM00543">
    <property type="entry name" value="MIF4G"/>
    <property type="match status" value="1"/>
</dbReference>
<dbReference type="SUPFAM" id="SSF48371">
    <property type="entry name" value="ARM repeat"/>
    <property type="match status" value="1"/>
</dbReference>
<dbReference type="PROSITE" id="PS51366">
    <property type="entry name" value="MI"/>
    <property type="match status" value="1"/>
</dbReference>
<reference key="1">
    <citation type="journal article" date="1997" name="Nature">
        <title>The nucleotide sequence of Saccharomyces cerevisiae chromosome XII.</title>
        <authorList>
            <person name="Johnston M."/>
            <person name="Hillier L.W."/>
            <person name="Riles L."/>
            <person name="Albermann K."/>
            <person name="Andre B."/>
            <person name="Ansorge W."/>
            <person name="Benes V."/>
            <person name="Brueckner M."/>
            <person name="Delius H."/>
            <person name="Dubois E."/>
            <person name="Duesterhoeft A."/>
            <person name="Entian K.-D."/>
            <person name="Floeth M."/>
            <person name="Goffeau A."/>
            <person name="Hebling U."/>
            <person name="Heumann K."/>
            <person name="Heuss-Neitzel D."/>
            <person name="Hilbert H."/>
            <person name="Hilger F."/>
            <person name="Kleine K."/>
            <person name="Koetter P."/>
            <person name="Louis E.J."/>
            <person name="Messenguy F."/>
            <person name="Mewes H.-W."/>
            <person name="Miosga T."/>
            <person name="Moestl D."/>
            <person name="Mueller-Auer S."/>
            <person name="Nentwich U."/>
            <person name="Obermaier B."/>
            <person name="Piravandi E."/>
            <person name="Pohl T.M."/>
            <person name="Portetelle D."/>
            <person name="Purnelle B."/>
            <person name="Rechmann S."/>
            <person name="Rieger M."/>
            <person name="Rinke M."/>
            <person name="Rose M."/>
            <person name="Scharfe M."/>
            <person name="Scherens B."/>
            <person name="Scholler P."/>
            <person name="Schwager C."/>
            <person name="Schwarz S."/>
            <person name="Underwood A.P."/>
            <person name="Urrestarazu L.A."/>
            <person name="Vandenbol M."/>
            <person name="Verhasselt P."/>
            <person name="Vierendeels F."/>
            <person name="Voet M."/>
            <person name="Volckaert G."/>
            <person name="Voss H."/>
            <person name="Wambutt R."/>
            <person name="Wedler E."/>
            <person name="Wedler H."/>
            <person name="Zimmermann F.K."/>
            <person name="Zollner A."/>
            <person name="Hani J."/>
            <person name="Hoheisel J.D."/>
        </authorList>
    </citation>
    <scope>NUCLEOTIDE SEQUENCE [LARGE SCALE GENOMIC DNA]</scope>
    <source>
        <strain>ATCC 204508 / S288c</strain>
    </source>
</reference>
<reference key="2">
    <citation type="journal article" date="2014" name="G3 (Bethesda)">
        <title>The reference genome sequence of Saccharomyces cerevisiae: Then and now.</title>
        <authorList>
            <person name="Engel S.R."/>
            <person name="Dietrich F.S."/>
            <person name="Fisk D.G."/>
            <person name="Binkley G."/>
            <person name="Balakrishnan R."/>
            <person name="Costanzo M.C."/>
            <person name="Dwight S.S."/>
            <person name="Hitz B.C."/>
            <person name="Karra K."/>
            <person name="Nash R.S."/>
            <person name="Weng S."/>
            <person name="Wong E.D."/>
            <person name="Lloyd P."/>
            <person name="Skrzypek M.S."/>
            <person name="Miyasato S.R."/>
            <person name="Simison M."/>
            <person name="Cherry J.M."/>
        </authorList>
    </citation>
    <scope>GENOME REANNOTATION</scope>
    <source>
        <strain>ATCC 204508 / S288c</strain>
    </source>
</reference>
<reference key="3">
    <citation type="journal article" date="2000" name="FEBS Lett.">
        <title>SGD1 encodes an essential nuclear protein of Saccharomyces cerevisiae that affects expression of the GPD1 gene for glycerol 3-phosphate dehydrogenase.</title>
        <authorList>
            <person name="Akhtar N."/>
            <person name="Paahlman A.-K."/>
            <person name="Larsson K."/>
            <person name="Corbett A.H."/>
            <person name="Adler L."/>
        </authorList>
    </citation>
    <scope>FUNCTION</scope>
    <scope>SUBCELLULAR LOCATION</scope>
</reference>
<reference key="4">
    <citation type="journal article" date="2002" name="Mol. Genet. Genomics">
        <title>Phospholipase C interacts with Sgd1p and is required for expression of GPD1 and osmoresistance in Saccharomyces cerevisiae.</title>
        <authorList>
            <person name="Lin H."/>
            <person name="Nguyen P.H."/>
            <person name="Vancura A."/>
        </authorList>
    </citation>
    <scope>FUNCTION</scope>
    <scope>INTERACTION WITH PLC1</scope>
</reference>
<reference key="5">
    <citation type="journal article" date="2003" name="Nature">
        <title>Global analysis of protein localization in budding yeast.</title>
        <authorList>
            <person name="Huh W.-K."/>
            <person name="Falvo J.V."/>
            <person name="Gerke L.C."/>
            <person name="Carroll A.S."/>
            <person name="Howson R.W."/>
            <person name="Weissman J.S."/>
            <person name="O'Shea E.K."/>
        </authorList>
    </citation>
    <scope>SUBCELLULAR LOCATION [LARGE SCALE ANALYSIS]</scope>
</reference>
<reference key="6">
    <citation type="journal article" date="2003" name="Nature">
        <title>Global analysis of protein expression in yeast.</title>
        <authorList>
            <person name="Ghaemmaghami S."/>
            <person name="Huh W.-K."/>
            <person name="Bower K."/>
            <person name="Howson R.W."/>
            <person name="Belle A."/>
            <person name="Dephoure N."/>
            <person name="O'Shea E.K."/>
            <person name="Weissman J.S."/>
        </authorList>
    </citation>
    <scope>LEVEL OF PROTEIN EXPRESSION [LARGE SCALE ANALYSIS]</scope>
</reference>
<reference key="7">
    <citation type="journal article" date="2009" name="Science">
        <title>Global analysis of Cdk1 substrate phosphorylation sites provides insights into evolution.</title>
        <authorList>
            <person name="Holt L.J."/>
            <person name="Tuch B.B."/>
            <person name="Villen J."/>
            <person name="Johnson A.D."/>
            <person name="Gygi S.P."/>
            <person name="Morgan D.O."/>
        </authorList>
    </citation>
    <scope>PHOSPHORYLATION [LARGE SCALE ANALYSIS] AT SER-736</scope>
    <scope>IDENTIFICATION BY MASS SPECTROMETRY [LARGE SCALE ANALYSIS]</scope>
</reference>
<reference key="8">
    <citation type="journal article" date="2012" name="Proc. Natl. Acad. Sci. U.S.A.">
        <title>N-terminal acetylome analyses and functional insights of the N-terminal acetyltransferase NatB.</title>
        <authorList>
            <person name="Van Damme P."/>
            <person name="Lasa M."/>
            <person name="Polevoda B."/>
            <person name="Gazquez C."/>
            <person name="Elosegui-Artola A."/>
            <person name="Kim D.S."/>
            <person name="De Juan-Pardo E."/>
            <person name="Demeyer K."/>
            <person name="Hole K."/>
            <person name="Larrea E."/>
            <person name="Timmerman E."/>
            <person name="Prieto J."/>
            <person name="Arnesen T."/>
            <person name="Sherman F."/>
            <person name="Gevaert K."/>
            <person name="Aldabe R."/>
        </authorList>
    </citation>
    <scope>IDENTIFICATION BY MASS SPECTROMETRY [LARGE SCALE ANALYSIS]</scope>
</reference>
<proteinExistence type="evidence at protein level"/>
<name>SGD1_YEAST</name>
<protein>
    <recommendedName>
        <fullName>Suppressor of glycerol defect protein 1</fullName>
    </recommendedName>
</protein>
<accession>Q06132</accession>
<accession>D6VYX6</accession>
<evidence type="ECO:0000255" key="1">
    <source>
        <dbReference type="PROSITE-ProRule" id="PRU00698"/>
    </source>
</evidence>
<evidence type="ECO:0000256" key="2">
    <source>
        <dbReference type="SAM" id="MobiDB-lite"/>
    </source>
</evidence>
<evidence type="ECO:0000269" key="3">
    <source>
    </source>
</evidence>
<evidence type="ECO:0000269" key="4">
    <source>
    </source>
</evidence>
<evidence type="ECO:0000269" key="5">
    <source>
    </source>
</evidence>
<evidence type="ECO:0000269" key="6">
    <source>
    </source>
</evidence>
<evidence type="ECO:0000305" key="7"/>
<evidence type="ECO:0007744" key="8">
    <source>
    </source>
</evidence>
<sequence>MQKTDGIRIPGVILDELKTLDYSQDERFSISEGKKRRRGNGKHLSRKEKRKMERADKKRKIISTREINSSRLKSAPTSEKRSANAGVKNVGKQANGKNPISSDESESNENWDSDEVLTDEVAEESGEQAMSAEETMKKLESLKRKAKGIQGAENSGEIKGNSYEKKHIRNRDTNENFVSYPLAPSDRSAFERDEMDMQYYAKKLGLKGERKAIHAKDEFDAIGGLLEGLEYFENYGKSDEEYGDFATETNSMRKDDEASEKAFSSDDDLSASDFEDSDGLSESDNDSVADSDDNYRREKENPYVAPTQSVESYVPPSLRKKLDDSENNSTLSEISKKVNSSLNKLSDSNITIIITDLNRLYDSLPRQYVTESLTKGILNIISQNQKLLDGFIMNYAALAYTLSKLRGIEVGAFFIQKTVEAFLHHYEEEMENILKDQQSKISSKICINIATLLSYCYNFGFVSCRLIYDIIRIFVADPNEFTTELLLRIISISGQLIRGDDPSALRDIRSELLKNAKNLKEQSPRLRFLMDTMSDLKNNRLKPSILATDHHPLKKNLQSILNSSSSWEPLQVSLEDIKNIDSKGKWWLVGASWRGNMENAFEVSINNENDASKSKKSKISIEDDLLDDIPDWNIIARQQRMNTDIRRAIFISIMSAQDYLDAFSKLEKLSLKNKQVLEIPRIVLHCLLADSGSNGYNHYYALVANKICERYSHLSKSFQFLFWDVIKKFEDKEFDSESDTDEEDDLDDKEKLLRISNQGRFFGSLLANDILKLDVFKHVPFMGGLNTEGMLFMEILLFQLFLTVAKKSEKKLKMDESGNKRIIYSDDYLRDVLTKNVKSENMLFILKGLKWFINKKFRYHNFLAGKKGDKAFDRDERRLAWASKAAKSIIDKELENIDS</sequence>
<gene>
    <name type="primary">SGD1</name>
    <name type="ordered locus">YLR336C</name>
</gene>
<comment type="function">
    <text evidence="3 4">Involved in osmoregulatory glycerol response, probably through its interaction with PLC1 which regulates the expression of GDP1.</text>
</comment>
<comment type="subunit">
    <text evidence="4">Interacts with PLC1.</text>
</comment>
<comment type="interaction">
    <interactant intactId="EBI-34377">
        <id>Q06132</id>
    </interactant>
    <interactant intactId="EBI-6776">
        <id>Q12099</id>
        <label>FAL1</label>
    </interactant>
    <organismsDiffer>false</organismsDiffer>
    <experiments>4</experiments>
</comment>
<comment type="interaction">
    <interactant intactId="EBI-34377">
        <id>Q06132</id>
    </interactant>
    <interactant intactId="EBI-13485">
        <id>P32383</id>
        <label>PLC1</label>
    </interactant>
    <organismsDiffer>false</organismsDiffer>
    <experiments>3</experiments>
</comment>
<comment type="interaction">
    <interactant intactId="EBI-34377">
        <id>Q06132</id>
    </interactant>
    <interactant intactId="EBI-35124">
        <id>Q06506</id>
        <label>RRP9</label>
    </interactant>
    <organismsDiffer>false</organismsDiffer>
    <experiments>3</experiments>
</comment>
<comment type="interaction">
    <interactant intactId="EBI-34377">
        <id>Q06132</id>
    </interactant>
    <interactant intactId="EBI-22119">
        <id>Q02354</id>
        <label>UTP6</label>
    </interactant>
    <organismsDiffer>false</organismsDiffer>
    <experiments>3</experiments>
</comment>
<comment type="subcellular location">
    <subcellularLocation>
        <location evidence="3 5">Nucleus</location>
        <location evidence="3 5">Nucleolus</location>
    </subcellularLocation>
</comment>
<comment type="miscellaneous">
    <text evidence="6">Present with 3060 molecules/cell in log phase SD medium.</text>
</comment>
<comment type="similarity">
    <text evidence="7">Belongs to the CWC22 family.</text>
</comment>